<gene>
    <name type="ordered locus">MJ0133</name>
</gene>
<sequence>MNREIMLIFGTAGVPISAEDEFKAVDVLRKLNLGAMELEFVKGVYMKEDYAKKLKEYGEDIIFSAHAPHYINLNANEEEKVENSIRRIIKTAKVLNNCGKNLVFHPGYYLKRSKEVTYNRIKSNIQRILDKLEALNLNVMLRPETTGKTTQFGDIDETLKLCFELNILPCIDFSHIYARSRGVINDYNSFYKILEKVENVLGKEAIKDMHIHLSGIEYGKGGERRHLPLNESNFNYRDVLKALKDFDASGTVICESPMLEYDAVLLMKCYNEL</sequence>
<reference key="1">
    <citation type="journal article" date="1996" name="Science">
        <title>Complete genome sequence of the methanogenic archaeon, Methanococcus jannaschii.</title>
        <authorList>
            <person name="Bult C.J."/>
            <person name="White O."/>
            <person name="Olsen G.J."/>
            <person name="Zhou L."/>
            <person name="Fleischmann R.D."/>
            <person name="Sutton G.G."/>
            <person name="Blake J.A."/>
            <person name="FitzGerald L.M."/>
            <person name="Clayton R.A."/>
            <person name="Gocayne J.D."/>
            <person name="Kerlavage A.R."/>
            <person name="Dougherty B.A."/>
            <person name="Tomb J.-F."/>
            <person name="Adams M.D."/>
            <person name="Reich C.I."/>
            <person name="Overbeek R."/>
            <person name="Kirkness E.F."/>
            <person name="Weinstock K.G."/>
            <person name="Merrick J.M."/>
            <person name="Glodek A."/>
            <person name="Scott J.L."/>
            <person name="Geoghagen N.S.M."/>
            <person name="Weidman J.F."/>
            <person name="Fuhrmann J.L."/>
            <person name="Nguyen D."/>
            <person name="Utterback T.R."/>
            <person name="Kelley J.M."/>
            <person name="Peterson J.D."/>
            <person name="Sadow P.W."/>
            <person name="Hanna M.C."/>
            <person name="Cotton M.D."/>
            <person name="Roberts K.M."/>
            <person name="Hurst M.A."/>
            <person name="Kaine B.P."/>
            <person name="Borodovsky M."/>
            <person name="Klenk H.-P."/>
            <person name="Fraser C.M."/>
            <person name="Smith H.O."/>
            <person name="Woese C.R."/>
            <person name="Venter J.C."/>
        </authorList>
    </citation>
    <scope>NUCLEOTIDE SEQUENCE [LARGE SCALE GENOMIC DNA]</scope>
    <source>
        <strain>ATCC 43067 / DSM 2661 / JAL-1 / JCM 10045 / NBRC 100440</strain>
    </source>
</reference>
<accession>Q57597</accession>
<protein>
    <recommendedName>
        <fullName>Uncharacterized protein MJ0133</fullName>
    </recommendedName>
</protein>
<feature type="chain" id="PRO_0000106711" description="Uncharacterized protein MJ0133">
    <location>
        <begin position="1"/>
        <end position="273"/>
    </location>
</feature>
<dbReference type="EMBL" id="L77117">
    <property type="protein sequence ID" value="AAB98114.1"/>
    <property type="molecule type" value="Genomic_DNA"/>
</dbReference>
<dbReference type="PIR" id="E64316">
    <property type="entry name" value="E64316"/>
</dbReference>
<dbReference type="SMR" id="Q57597"/>
<dbReference type="FunCoup" id="Q57597">
    <property type="interactions" value="6"/>
</dbReference>
<dbReference type="STRING" id="243232.MJ_0133"/>
<dbReference type="PaxDb" id="243232-MJ_0133"/>
<dbReference type="DNASU" id="1450974"/>
<dbReference type="EnsemblBacteria" id="AAB98114">
    <property type="protein sequence ID" value="AAB98114"/>
    <property type="gene ID" value="MJ_0133"/>
</dbReference>
<dbReference type="KEGG" id="mja:MJ_0133"/>
<dbReference type="eggNOG" id="arCOG01894">
    <property type="taxonomic scope" value="Archaea"/>
</dbReference>
<dbReference type="HOGENOM" id="CLU_068832_0_0_2"/>
<dbReference type="InParanoid" id="Q57597"/>
<dbReference type="PhylomeDB" id="Q57597"/>
<dbReference type="Proteomes" id="UP000000805">
    <property type="component" value="Chromosome"/>
</dbReference>
<dbReference type="GO" id="GO:0003677">
    <property type="term" value="F:DNA binding"/>
    <property type="evidence" value="ECO:0007669"/>
    <property type="project" value="InterPro"/>
</dbReference>
<dbReference type="GO" id="GO:0003906">
    <property type="term" value="F:DNA-(apurinic or apyrimidinic site) endonuclease activity"/>
    <property type="evidence" value="ECO:0000318"/>
    <property type="project" value="GO_Central"/>
</dbReference>
<dbReference type="GO" id="GO:0008081">
    <property type="term" value="F:phosphoric diester hydrolase activity"/>
    <property type="evidence" value="ECO:0000318"/>
    <property type="project" value="GO_Central"/>
</dbReference>
<dbReference type="GO" id="GO:0008270">
    <property type="term" value="F:zinc ion binding"/>
    <property type="evidence" value="ECO:0007669"/>
    <property type="project" value="InterPro"/>
</dbReference>
<dbReference type="GO" id="GO:0006284">
    <property type="term" value="P:base-excision repair"/>
    <property type="evidence" value="ECO:0000318"/>
    <property type="project" value="GO_Central"/>
</dbReference>
<dbReference type="CDD" id="cd00019">
    <property type="entry name" value="AP2Ec"/>
    <property type="match status" value="1"/>
</dbReference>
<dbReference type="FunFam" id="3.20.20.150:FF:000017">
    <property type="entry name" value="Endonuclease IV related protein"/>
    <property type="match status" value="1"/>
</dbReference>
<dbReference type="Gene3D" id="3.20.20.150">
    <property type="entry name" value="Divalent-metal-dependent TIM barrel enzymes"/>
    <property type="match status" value="1"/>
</dbReference>
<dbReference type="InterPro" id="IPR001719">
    <property type="entry name" value="AP_endonuc_2"/>
</dbReference>
<dbReference type="InterPro" id="IPR036237">
    <property type="entry name" value="Xyl_isomerase-like_sf"/>
</dbReference>
<dbReference type="InterPro" id="IPR013022">
    <property type="entry name" value="Xyl_isomerase-like_TIM-brl"/>
</dbReference>
<dbReference type="PANTHER" id="PTHR21445:SF0">
    <property type="entry name" value="APURINIC-APYRIMIDINIC ENDONUCLEASE"/>
    <property type="match status" value="1"/>
</dbReference>
<dbReference type="PANTHER" id="PTHR21445">
    <property type="entry name" value="ENDONUCLEASE IV ENDODEOXYRIBONUCLEASE IV"/>
    <property type="match status" value="1"/>
</dbReference>
<dbReference type="Pfam" id="PF01261">
    <property type="entry name" value="AP_endonuc_2"/>
    <property type="match status" value="1"/>
</dbReference>
<dbReference type="SMART" id="SM00518">
    <property type="entry name" value="AP2Ec"/>
    <property type="match status" value="1"/>
</dbReference>
<dbReference type="SUPFAM" id="SSF51658">
    <property type="entry name" value="Xylose isomerase-like"/>
    <property type="match status" value="1"/>
</dbReference>
<proteinExistence type="predicted"/>
<organism>
    <name type="scientific">Methanocaldococcus jannaschii (strain ATCC 43067 / DSM 2661 / JAL-1 / JCM 10045 / NBRC 100440)</name>
    <name type="common">Methanococcus jannaschii</name>
    <dbReference type="NCBI Taxonomy" id="243232"/>
    <lineage>
        <taxon>Archaea</taxon>
        <taxon>Methanobacteriati</taxon>
        <taxon>Methanobacteriota</taxon>
        <taxon>Methanomada group</taxon>
        <taxon>Methanococci</taxon>
        <taxon>Methanococcales</taxon>
        <taxon>Methanocaldococcaceae</taxon>
        <taxon>Methanocaldococcus</taxon>
    </lineage>
</organism>
<name>Y133_METJA</name>
<keyword id="KW-1185">Reference proteome</keyword>